<feature type="chain" id="PRO_0000381617" description="Biotin synthase">
    <location>
        <begin position="1"/>
        <end position="357"/>
    </location>
</feature>
<feature type="domain" description="Radical SAM core" evidence="2">
    <location>
        <begin position="41"/>
        <end position="268"/>
    </location>
</feature>
<feature type="binding site" evidence="1">
    <location>
        <position position="56"/>
    </location>
    <ligand>
        <name>[4Fe-4S] cluster</name>
        <dbReference type="ChEBI" id="CHEBI:49883"/>
        <note>4Fe-4S-S-AdoMet</note>
    </ligand>
</feature>
<feature type="binding site" evidence="1">
    <location>
        <position position="60"/>
    </location>
    <ligand>
        <name>[4Fe-4S] cluster</name>
        <dbReference type="ChEBI" id="CHEBI:49883"/>
        <note>4Fe-4S-S-AdoMet</note>
    </ligand>
</feature>
<feature type="binding site" evidence="1">
    <location>
        <position position="63"/>
    </location>
    <ligand>
        <name>[4Fe-4S] cluster</name>
        <dbReference type="ChEBI" id="CHEBI:49883"/>
        <note>4Fe-4S-S-AdoMet</note>
    </ligand>
</feature>
<feature type="binding site" evidence="1">
    <location>
        <position position="100"/>
    </location>
    <ligand>
        <name>[2Fe-2S] cluster</name>
        <dbReference type="ChEBI" id="CHEBI:190135"/>
    </ligand>
</feature>
<feature type="binding site" evidence="1">
    <location>
        <position position="131"/>
    </location>
    <ligand>
        <name>[2Fe-2S] cluster</name>
        <dbReference type="ChEBI" id="CHEBI:190135"/>
    </ligand>
</feature>
<feature type="binding site" evidence="1">
    <location>
        <position position="191"/>
    </location>
    <ligand>
        <name>[2Fe-2S] cluster</name>
        <dbReference type="ChEBI" id="CHEBI:190135"/>
    </ligand>
</feature>
<feature type="binding site" evidence="1">
    <location>
        <position position="263"/>
    </location>
    <ligand>
        <name>[2Fe-2S] cluster</name>
        <dbReference type="ChEBI" id="CHEBI:190135"/>
    </ligand>
</feature>
<keyword id="KW-0001">2Fe-2S</keyword>
<keyword id="KW-0004">4Fe-4S</keyword>
<keyword id="KW-0093">Biotin biosynthesis</keyword>
<keyword id="KW-0408">Iron</keyword>
<keyword id="KW-0411">Iron-sulfur</keyword>
<keyword id="KW-0479">Metal-binding</keyword>
<keyword id="KW-1185">Reference proteome</keyword>
<keyword id="KW-0949">S-adenosyl-L-methionine</keyword>
<keyword id="KW-0808">Transferase</keyword>
<dbReference type="EC" id="2.8.1.6" evidence="1"/>
<dbReference type="EMBL" id="CP000302">
    <property type="protein sequence ID" value="ABE54942.1"/>
    <property type="molecule type" value="Genomic_DNA"/>
</dbReference>
<dbReference type="RefSeq" id="WP_011496100.1">
    <property type="nucleotide sequence ID" value="NC_007954.1"/>
</dbReference>
<dbReference type="SMR" id="Q12NN4"/>
<dbReference type="STRING" id="318161.Sden_1658"/>
<dbReference type="KEGG" id="sdn:Sden_1658"/>
<dbReference type="eggNOG" id="COG0502">
    <property type="taxonomic scope" value="Bacteria"/>
</dbReference>
<dbReference type="HOGENOM" id="CLU_033172_1_2_6"/>
<dbReference type="OrthoDB" id="9786826at2"/>
<dbReference type="UniPathway" id="UPA00078">
    <property type="reaction ID" value="UER00162"/>
</dbReference>
<dbReference type="Proteomes" id="UP000001982">
    <property type="component" value="Chromosome"/>
</dbReference>
<dbReference type="GO" id="GO:0051537">
    <property type="term" value="F:2 iron, 2 sulfur cluster binding"/>
    <property type="evidence" value="ECO:0007669"/>
    <property type="project" value="UniProtKB-KW"/>
</dbReference>
<dbReference type="GO" id="GO:0051539">
    <property type="term" value="F:4 iron, 4 sulfur cluster binding"/>
    <property type="evidence" value="ECO:0007669"/>
    <property type="project" value="UniProtKB-KW"/>
</dbReference>
<dbReference type="GO" id="GO:0004076">
    <property type="term" value="F:biotin synthase activity"/>
    <property type="evidence" value="ECO:0007669"/>
    <property type="project" value="UniProtKB-UniRule"/>
</dbReference>
<dbReference type="GO" id="GO:0005506">
    <property type="term" value="F:iron ion binding"/>
    <property type="evidence" value="ECO:0007669"/>
    <property type="project" value="UniProtKB-UniRule"/>
</dbReference>
<dbReference type="GO" id="GO:0009102">
    <property type="term" value="P:biotin biosynthetic process"/>
    <property type="evidence" value="ECO:0007669"/>
    <property type="project" value="UniProtKB-UniRule"/>
</dbReference>
<dbReference type="CDD" id="cd01335">
    <property type="entry name" value="Radical_SAM"/>
    <property type="match status" value="1"/>
</dbReference>
<dbReference type="FunFam" id="3.20.20.70:FF:000011">
    <property type="entry name" value="Biotin synthase"/>
    <property type="match status" value="1"/>
</dbReference>
<dbReference type="Gene3D" id="3.20.20.70">
    <property type="entry name" value="Aldolase class I"/>
    <property type="match status" value="1"/>
</dbReference>
<dbReference type="HAMAP" id="MF_01694">
    <property type="entry name" value="BioB"/>
    <property type="match status" value="1"/>
</dbReference>
<dbReference type="InterPro" id="IPR013785">
    <property type="entry name" value="Aldolase_TIM"/>
</dbReference>
<dbReference type="InterPro" id="IPR010722">
    <property type="entry name" value="BATS_dom"/>
</dbReference>
<dbReference type="InterPro" id="IPR002684">
    <property type="entry name" value="Biotin_synth/BioAB"/>
</dbReference>
<dbReference type="InterPro" id="IPR024177">
    <property type="entry name" value="Biotin_synthase"/>
</dbReference>
<dbReference type="InterPro" id="IPR006638">
    <property type="entry name" value="Elp3/MiaA/NifB-like_rSAM"/>
</dbReference>
<dbReference type="InterPro" id="IPR007197">
    <property type="entry name" value="rSAM"/>
</dbReference>
<dbReference type="NCBIfam" id="TIGR00433">
    <property type="entry name" value="bioB"/>
    <property type="match status" value="1"/>
</dbReference>
<dbReference type="PANTHER" id="PTHR22976">
    <property type="entry name" value="BIOTIN SYNTHASE"/>
    <property type="match status" value="1"/>
</dbReference>
<dbReference type="PANTHER" id="PTHR22976:SF2">
    <property type="entry name" value="BIOTIN SYNTHASE, MITOCHONDRIAL"/>
    <property type="match status" value="1"/>
</dbReference>
<dbReference type="Pfam" id="PF06968">
    <property type="entry name" value="BATS"/>
    <property type="match status" value="1"/>
</dbReference>
<dbReference type="Pfam" id="PF04055">
    <property type="entry name" value="Radical_SAM"/>
    <property type="match status" value="1"/>
</dbReference>
<dbReference type="PIRSF" id="PIRSF001619">
    <property type="entry name" value="Biotin_synth"/>
    <property type="match status" value="1"/>
</dbReference>
<dbReference type="SFLD" id="SFLDG01060">
    <property type="entry name" value="BATS_domain_containing"/>
    <property type="match status" value="1"/>
</dbReference>
<dbReference type="SFLD" id="SFLDF00272">
    <property type="entry name" value="biotin_synthase"/>
    <property type="match status" value="1"/>
</dbReference>
<dbReference type="SMART" id="SM00876">
    <property type="entry name" value="BATS"/>
    <property type="match status" value="1"/>
</dbReference>
<dbReference type="SMART" id="SM00729">
    <property type="entry name" value="Elp3"/>
    <property type="match status" value="1"/>
</dbReference>
<dbReference type="SUPFAM" id="SSF102114">
    <property type="entry name" value="Radical SAM enzymes"/>
    <property type="match status" value="1"/>
</dbReference>
<dbReference type="PROSITE" id="PS51918">
    <property type="entry name" value="RADICAL_SAM"/>
    <property type="match status" value="1"/>
</dbReference>
<accession>Q12NN4</accession>
<protein>
    <recommendedName>
        <fullName evidence="1">Biotin synthase</fullName>
        <ecNumber evidence="1">2.8.1.6</ecNumber>
    </recommendedName>
</protein>
<gene>
    <name evidence="1" type="primary">bioB</name>
    <name type="ordered locus">Sden_1658</name>
</gene>
<sequence length="357" mass="39489">MSLFEVRHDWKKAEIEALFALPMNDLLFKAHTIHRESFDPNEVQISRLLSIKTGACPEDCKYCPQSARYDTGLEKERLLEIEKVLTEAKSAKAAGASRFCMGAAWRNPRDRDMPYLTQMVKDVKALGLETCMTLGMLSTEQSQKLAGAGLDYYNHNLDTSPEYYGDVITTRTYQSRLDTLSNVRASGMKVCSGGIVGMGEKASDRAGLLQQLANLEQHPDSVPINMLVKVAGTPFEKIDDLDPLEFVRTIAVARIIMPKSRVRLSAGREKMSDELQSMCFFAGANSIFYGCKLLTTANPEENDDMSLFKRLGLRPEQGPAAPVAQVATNLDQEQALIAKASALNEKATQQFYDAGAL</sequence>
<organism>
    <name type="scientific">Shewanella denitrificans (strain OS217 / ATCC BAA-1090 / DSM 15013)</name>
    <dbReference type="NCBI Taxonomy" id="318161"/>
    <lineage>
        <taxon>Bacteria</taxon>
        <taxon>Pseudomonadati</taxon>
        <taxon>Pseudomonadota</taxon>
        <taxon>Gammaproteobacteria</taxon>
        <taxon>Alteromonadales</taxon>
        <taxon>Shewanellaceae</taxon>
        <taxon>Shewanella</taxon>
    </lineage>
</organism>
<name>BIOB_SHEDO</name>
<reference key="1">
    <citation type="submission" date="2006-03" db="EMBL/GenBank/DDBJ databases">
        <title>Complete sequence of Shewanella denitrificans OS217.</title>
        <authorList>
            <consortium name="US DOE Joint Genome Institute"/>
            <person name="Copeland A."/>
            <person name="Lucas S."/>
            <person name="Lapidus A."/>
            <person name="Barry K."/>
            <person name="Detter J.C."/>
            <person name="Glavina del Rio T."/>
            <person name="Hammon N."/>
            <person name="Israni S."/>
            <person name="Dalin E."/>
            <person name="Tice H."/>
            <person name="Pitluck S."/>
            <person name="Brettin T."/>
            <person name="Bruce D."/>
            <person name="Han C."/>
            <person name="Tapia R."/>
            <person name="Gilna P."/>
            <person name="Kiss H."/>
            <person name="Schmutz J."/>
            <person name="Larimer F."/>
            <person name="Land M."/>
            <person name="Hauser L."/>
            <person name="Kyrpides N."/>
            <person name="Lykidis A."/>
            <person name="Richardson P."/>
        </authorList>
    </citation>
    <scope>NUCLEOTIDE SEQUENCE [LARGE SCALE GENOMIC DNA]</scope>
    <source>
        <strain>OS217 / ATCC BAA-1090 / DSM 15013</strain>
    </source>
</reference>
<evidence type="ECO:0000255" key="1">
    <source>
        <dbReference type="HAMAP-Rule" id="MF_01694"/>
    </source>
</evidence>
<evidence type="ECO:0000255" key="2">
    <source>
        <dbReference type="PROSITE-ProRule" id="PRU01266"/>
    </source>
</evidence>
<comment type="function">
    <text evidence="1">Catalyzes the conversion of dethiobiotin (DTB) to biotin by the insertion of a sulfur atom into dethiobiotin via a radical-based mechanism.</text>
</comment>
<comment type="catalytic activity">
    <reaction evidence="1">
        <text>(4R,5S)-dethiobiotin + (sulfur carrier)-SH + 2 reduced [2Fe-2S]-[ferredoxin] + 2 S-adenosyl-L-methionine = (sulfur carrier)-H + biotin + 2 5'-deoxyadenosine + 2 L-methionine + 2 oxidized [2Fe-2S]-[ferredoxin]</text>
        <dbReference type="Rhea" id="RHEA:22060"/>
        <dbReference type="Rhea" id="RHEA-COMP:10000"/>
        <dbReference type="Rhea" id="RHEA-COMP:10001"/>
        <dbReference type="Rhea" id="RHEA-COMP:14737"/>
        <dbReference type="Rhea" id="RHEA-COMP:14739"/>
        <dbReference type="ChEBI" id="CHEBI:17319"/>
        <dbReference type="ChEBI" id="CHEBI:29917"/>
        <dbReference type="ChEBI" id="CHEBI:33737"/>
        <dbReference type="ChEBI" id="CHEBI:33738"/>
        <dbReference type="ChEBI" id="CHEBI:57586"/>
        <dbReference type="ChEBI" id="CHEBI:57844"/>
        <dbReference type="ChEBI" id="CHEBI:59789"/>
        <dbReference type="ChEBI" id="CHEBI:64428"/>
        <dbReference type="ChEBI" id="CHEBI:149473"/>
        <dbReference type="EC" id="2.8.1.6"/>
    </reaction>
</comment>
<comment type="cofactor">
    <cofactor evidence="1">
        <name>[4Fe-4S] cluster</name>
        <dbReference type="ChEBI" id="CHEBI:49883"/>
    </cofactor>
    <text evidence="1">Binds 1 [4Fe-4S] cluster. The cluster is coordinated with 3 cysteines and an exchangeable S-adenosyl-L-methionine.</text>
</comment>
<comment type="cofactor">
    <cofactor evidence="1">
        <name>[2Fe-2S] cluster</name>
        <dbReference type="ChEBI" id="CHEBI:190135"/>
    </cofactor>
    <text evidence="1">Binds 1 [2Fe-2S] cluster. The cluster is coordinated with 3 cysteines and 1 arginine.</text>
</comment>
<comment type="pathway">
    <text evidence="1">Cofactor biosynthesis; biotin biosynthesis; biotin from 7,8-diaminononanoate: step 2/2.</text>
</comment>
<comment type="subunit">
    <text evidence="1">Homodimer.</text>
</comment>
<comment type="similarity">
    <text evidence="1">Belongs to the radical SAM superfamily. Biotin synthase family.</text>
</comment>
<proteinExistence type="inferred from homology"/>